<sequence length="459" mass="49421">MSNRFAVILAAGKGTRMKSKLYKVLHPVCGKPMVQHVVNEVSQLGLQKLVTVVGHGAEKVQEQLGNVSEFALQAEQLGTAHAVDQAASVLANEEGTTLVICGDTPLITAETMEALLQQHEEAGAMATVLTAYIEEPAGYGRIVRNENGHVEKIVEHKDANEKELAIKEINTGTYCFDNKALFASLSKVSNDNVQGEYYLPDVIEILKNEGHIVSAYQTEHFDETLGVNDRVALSQAEIIMKNRINRKNMVNGVTIIDPSNTYISTDAVIGSDTVLHPGTVIEGNTVIGSDCEIGPHTVIRDSEIGDRTVIRQSTVHDSKLGTVVSVGPFAHIRPDSVIGDEVRVGNFVEIKKTVFGNRSKASHLSYIGDAQVGEDVNLGCGSITVNYDGKNKFKTVIGNGVFIGCNSNLVAPVTVEDGAYVAAGSTITENVPSKALSVARARQVNKEDYVDQLLNKKKS</sequence>
<gene>
    <name evidence="1" type="primary">glmU</name>
    <name type="ordered locus">BcerKBAB4_0044</name>
</gene>
<evidence type="ECO:0000255" key="1">
    <source>
        <dbReference type="HAMAP-Rule" id="MF_01631"/>
    </source>
</evidence>
<dbReference type="EC" id="2.7.7.23" evidence="1"/>
<dbReference type="EC" id="2.3.1.157" evidence="1"/>
<dbReference type="EMBL" id="CP000903">
    <property type="protein sequence ID" value="ABY41313.1"/>
    <property type="molecule type" value="Genomic_DNA"/>
</dbReference>
<dbReference type="RefSeq" id="WP_012260165.1">
    <property type="nucleotide sequence ID" value="NC_010184.1"/>
</dbReference>
<dbReference type="SMR" id="A9VN62"/>
<dbReference type="KEGG" id="bwe:BcerKBAB4_0044"/>
<dbReference type="eggNOG" id="COG1207">
    <property type="taxonomic scope" value="Bacteria"/>
</dbReference>
<dbReference type="HOGENOM" id="CLU_029499_15_2_9"/>
<dbReference type="UniPathway" id="UPA00113">
    <property type="reaction ID" value="UER00532"/>
</dbReference>
<dbReference type="UniPathway" id="UPA00113">
    <property type="reaction ID" value="UER00533"/>
</dbReference>
<dbReference type="UniPathway" id="UPA00973"/>
<dbReference type="Proteomes" id="UP000002154">
    <property type="component" value="Chromosome"/>
</dbReference>
<dbReference type="GO" id="GO:0005737">
    <property type="term" value="C:cytoplasm"/>
    <property type="evidence" value="ECO:0007669"/>
    <property type="project" value="UniProtKB-SubCell"/>
</dbReference>
<dbReference type="GO" id="GO:0016020">
    <property type="term" value="C:membrane"/>
    <property type="evidence" value="ECO:0007669"/>
    <property type="project" value="GOC"/>
</dbReference>
<dbReference type="GO" id="GO:0019134">
    <property type="term" value="F:glucosamine-1-phosphate N-acetyltransferase activity"/>
    <property type="evidence" value="ECO:0007669"/>
    <property type="project" value="UniProtKB-UniRule"/>
</dbReference>
<dbReference type="GO" id="GO:0000287">
    <property type="term" value="F:magnesium ion binding"/>
    <property type="evidence" value="ECO:0007669"/>
    <property type="project" value="UniProtKB-UniRule"/>
</dbReference>
<dbReference type="GO" id="GO:0003977">
    <property type="term" value="F:UDP-N-acetylglucosamine diphosphorylase activity"/>
    <property type="evidence" value="ECO:0007669"/>
    <property type="project" value="UniProtKB-UniRule"/>
</dbReference>
<dbReference type="GO" id="GO:0000902">
    <property type="term" value="P:cell morphogenesis"/>
    <property type="evidence" value="ECO:0007669"/>
    <property type="project" value="UniProtKB-UniRule"/>
</dbReference>
<dbReference type="GO" id="GO:0071555">
    <property type="term" value="P:cell wall organization"/>
    <property type="evidence" value="ECO:0007669"/>
    <property type="project" value="UniProtKB-KW"/>
</dbReference>
<dbReference type="GO" id="GO:0009245">
    <property type="term" value="P:lipid A biosynthetic process"/>
    <property type="evidence" value="ECO:0007669"/>
    <property type="project" value="UniProtKB-UniRule"/>
</dbReference>
<dbReference type="GO" id="GO:0009252">
    <property type="term" value="P:peptidoglycan biosynthetic process"/>
    <property type="evidence" value="ECO:0007669"/>
    <property type="project" value="UniProtKB-UniRule"/>
</dbReference>
<dbReference type="GO" id="GO:0008360">
    <property type="term" value="P:regulation of cell shape"/>
    <property type="evidence" value="ECO:0007669"/>
    <property type="project" value="UniProtKB-KW"/>
</dbReference>
<dbReference type="GO" id="GO:0006048">
    <property type="term" value="P:UDP-N-acetylglucosamine biosynthetic process"/>
    <property type="evidence" value="ECO:0007669"/>
    <property type="project" value="UniProtKB-UniPathway"/>
</dbReference>
<dbReference type="CDD" id="cd02540">
    <property type="entry name" value="GT2_GlmU_N_bac"/>
    <property type="match status" value="1"/>
</dbReference>
<dbReference type="CDD" id="cd03353">
    <property type="entry name" value="LbH_GlmU_C"/>
    <property type="match status" value="1"/>
</dbReference>
<dbReference type="FunFam" id="2.160.10.10:FF:000016">
    <property type="entry name" value="Bifunctional protein GlmU"/>
    <property type="match status" value="1"/>
</dbReference>
<dbReference type="FunFam" id="3.90.550.10:FF:000006">
    <property type="entry name" value="Bifunctional protein GlmU"/>
    <property type="match status" value="1"/>
</dbReference>
<dbReference type="Gene3D" id="2.160.10.10">
    <property type="entry name" value="Hexapeptide repeat proteins"/>
    <property type="match status" value="1"/>
</dbReference>
<dbReference type="Gene3D" id="3.90.550.10">
    <property type="entry name" value="Spore Coat Polysaccharide Biosynthesis Protein SpsA, Chain A"/>
    <property type="match status" value="1"/>
</dbReference>
<dbReference type="HAMAP" id="MF_01631">
    <property type="entry name" value="GlmU"/>
    <property type="match status" value="1"/>
</dbReference>
<dbReference type="InterPro" id="IPR005882">
    <property type="entry name" value="Bifunctional_GlmU"/>
</dbReference>
<dbReference type="InterPro" id="IPR050065">
    <property type="entry name" value="GlmU-like"/>
</dbReference>
<dbReference type="InterPro" id="IPR038009">
    <property type="entry name" value="GlmU_C_LbH"/>
</dbReference>
<dbReference type="InterPro" id="IPR001451">
    <property type="entry name" value="Hexapep"/>
</dbReference>
<dbReference type="InterPro" id="IPR018357">
    <property type="entry name" value="Hexapep_transf_CS"/>
</dbReference>
<dbReference type="InterPro" id="IPR005835">
    <property type="entry name" value="NTP_transferase_dom"/>
</dbReference>
<dbReference type="InterPro" id="IPR029044">
    <property type="entry name" value="Nucleotide-diphossugar_trans"/>
</dbReference>
<dbReference type="InterPro" id="IPR011004">
    <property type="entry name" value="Trimer_LpxA-like_sf"/>
</dbReference>
<dbReference type="NCBIfam" id="TIGR01173">
    <property type="entry name" value="glmU"/>
    <property type="match status" value="1"/>
</dbReference>
<dbReference type="NCBIfam" id="NF010934">
    <property type="entry name" value="PRK14354.1"/>
    <property type="match status" value="1"/>
</dbReference>
<dbReference type="PANTHER" id="PTHR43584:SF3">
    <property type="entry name" value="BIFUNCTIONAL PROTEIN GLMU"/>
    <property type="match status" value="1"/>
</dbReference>
<dbReference type="PANTHER" id="PTHR43584">
    <property type="entry name" value="NUCLEOTIDYL TRANSFERASE"/>
    <property type="match status" value="1"/>
</dbReference>
<dbReference type="Pfam" id="PF00132">
    <property type="entry name" value="Hexapep"/>
    <property type="match status" value="3"/>
</dbReference>
<dbReference type="Pfam" id="PF00483">
    <property type="entry name" value="NTP_transferase"/>
    <property type="match status" value="1"/>
</dbReference>
<dbReference type="SUPFAM" id="SSF53448">
    <property type="entry name" value="Nucleotide-diphospho-sugar transferases"/>
    <property type="match status" value="1"/>
</dbReference>
<dbReference type="SUPFAM" id="SSF51161">
    <property type="entry name" value="Trimeric LpxA-like enzymes"/>
    <property type="match status" value="1"/>
</dbReference>
<dbReference type="PROSITE" id="PS00101">
    <property type="entry name" value="HEXAPEP_TRANSFERASES"/>
    <property type="match status" value="1"/>
</dbReference>
<proteinExistence type="inferred from homology"/>
<keyword id="KW-0012">Acyltransferase</keyword>
<keyword id="KW-0133">Cell shape</keyword>
<keyword id="KW-0961">Cell wall biogenesis/degradation</keyword>
<keyword id="KW-0963">Cytoplasm</keyword>
<keyword id="KW-0460">Magnesium</keyword>
<keyword id="KW-0479">Metal-binding</keyword>
<keyword id="KW-0511">Multifunctional enzyme</keyword>
<keyword id="KW-0548">Nucleotidyltransferase</keyword>
<keyword id="KW-0573">Peptidoglycan synthesis</keyword>
<keyword id="KW-0677">Repeat</keyword>
<keyword id="KW-0808">Transferase</keyword>
<feature type="chain" id="PRO_1000186404" description="Bifunctional protein GlmU">
    <location>
        <begin position="1"/>
        <end position="459"/>
    </location>
</feature>
<feature type="region of interest" description="Pyrophosphorylase" evidence="1">
    <location>
        <begin position="1"/>
        <end position="230"/>
    </location>
</feature>
<feature type="region of interest" description="Linker" evidence="1">
    <location>
        <begin position="231"/>
        <end position="251"/>
    </location>
</feature>
<feature type="region of interest" description="N-acetyltransferase" evidence="1">
    <location>
        <begin position="252"/>
        <end position="459"/>
    </location>
</feature>
<feature type="active site" description="Proton acceptor" evidence="1">
    <location>
        <position position="363"/>
    </location>
</feature>
<feature type="binding site" evidence="1">
    <location>
        <begin position="9"/>
        <end position="12"/>
    </location>
    <ligand>
        <name>UDP-N-acetyl-alpha-D-glucosamine</name>
        <dbReference type="ChEBI" id="CHEBI:57705"/>
    </ligand>
</feature>
<feature type="binding site" evidence="1">
    <location>
        <position position="23"/>
    </location>
    <ligand>
        <name>UDP-N-acetyl-alpha-D-glucosamine</name>
        <dbReference type="ChEBI" id="CHEBI:57705"/>
    </ligand>
</feature>
<feature type="binding site" evidence="1">
    <location>
        <position position="73"/>
    </location>
    <ligand>
        <name>UDP-N-acetyl-alpha-D-glucosamine</name>
        <dbReference type="ChEBI" id="CHEBI:57705"/>
    </ligand>
</feature>
<feature type="binding site" evidence="1">
    <location>
        <begin position="78"/>
        <end position="79"/>
    </location>
    <ligand>
        <name>UDP-N-acetyl-alpha-D-glucosamine</name>
        <dbReference type="ChEBI" id="CHEBI:57705"/>
    </ligand>
</feature>
<feature type="binding site" evidence="1">
    <location>
        <position position="103"/>
    </location>
    <ligand>
        <name>Mg(2+)</name>
        <dbReference type="ChEBI" id="CHEBI:18420"/>
    </ligand>
</feature>
<feature type="binding site" evidence="1">
    <location>
        <position position="140"/>
    </location>
    <ligand>
        <name>UDP-N-acetyl-alpha-D-glucosamine</name>
        <dbReference type="ChEBI" id="CHEBI:57705"/>
    </ligand>
</feature>
<feature type="binding site" evidence="1">
    <location>
        <position position="155"/>
    </location>
    <ligand>
        <name>UDP-N-acetyl-alpha-D-glucosamine</name>
        <dbReference type="ChEBI" id="CHEBI:57705"/>
    </ligand>
</feature>
<feature type="binding site" evidence="1">
    <location>
        <position position="170"/>
    </location>
    <ligand>
        <name>UDP-N-acetyl-alpha-D-glucosamine</name>
        <dbReference type="ChEBI" id="CHEBI:57705"/>
    </ligand>
</feature>
<feature type="binding site" evidence="1">
    <location>
        <position position="228"/>
    </location>
    <ligand>
        <name>Mg(2+)</name>
        <dbReference type="ChEBI" id="CHEBI:18420"/>
    </ligand>
</feature>
<feature type="binding site" evidence="1">
    <location>
        <position position="228"/>
    </location>
    <ligand>
        <name>UDP-N-acetyl-alpha-D-glucosamine</name>
        <dbReference type="ChEBI" id="CHEBI:57705"/>
    </ligand>
</feature>
<feature type="binding site" evidence="1">
    <location>
        <position position="333"/>
    </location>
    <ligand>
        <name>UDP-N-acetyl-alpha-D-glucosamine</name>
        <dbReference type="ChEBI" id="CHEBI:57705"/>
    </ligand>
</feature>
<feature type="binding site" evidence="1">
    <location>
        <position position="351"/>
    </location>
    <ligand>
        <name>UDP-N-acetyl-alpha-D-glucosamine</name>
        <dbReference type="ChEBI" id="CHEBI:57705"/>
    </ligand>
</feature>
<feature type="binding site" evidence="1">
    <location>
        <position position="366"/>
    </location>
    <ligand>
        <name>UDP-N-acetyl-alpha-D-glucosamine</name>
        <dbReference type="ChEBI" id="CHEBI:57705"/>
    </ligand>
</feature>
<feature type="binding site" evidence="1">
    <location>
        <position position="377"/>
    </location>
    <ligand>
        <name>UDP-N-acetyl-alpha-D-glucosamine</name>
        <dbReference type="ChEBI" id="CHEBI:57705"/>
    </ligand>
</feature>
<feature type="binding site" evidence="1">
    <location>
        <begin position="386"/>
        <end position="387"/>
    </location>
    <ligand>
        <name>acetyl-CoA</name>
        <dbReference type="ChEBI" id="CHEBI:57288"/>
    </ligand>
</feature>
<feature type="binding site" evidence="1">
    <location>
        <position position="423"/>
    </location>
    <ligand>
        <name>acetyl-CoA</name>
        <dbReference type="ChEBI" id="CHEBI:57288"/>
    </ligand>
</feature>
<feature type="binding site" evidence="1">
    <location>
        <position position="440"/>
    </location>
    <ligand>
        <name>acetyl-CoA</name>
        <dbReference type="ChEBI" id="CHEBI:57288"/>
    </ligand>
</feature>
<name>GLMU_BACMK</name>
<reference key="1">
    <citation type="journal article" date="2008" name="Chem. Biol. Interact.">
        <title>Extending the Bacillus cereus group genomics to putative food-borne pathogens of different toxicity.</title>
        <authorList>
            <person name="Lapidus A."/>
            <person name="Goltsman E."/>
            <person name="Auger S."/>
            <person name="Galleron N."/>
            <person name="Segurens B."/>
            <person name="Dossat C."/>
            <person name="Land M.L."/>
            <person name="Broussolle V."/>
            <person name="Brillard J."/>
            <person name="Guinebretiere M.-H."/>
            <person name="Sanchis V."/>
            <person name="Nguen-the C."/>
            <person name="Lereclus D."/>
            <person name="Richardson P."/>
            <person name="Wincker P."/>
            <person name="Weissenbach J."/>
            <person name="Ehrlich S.D."/>
            <person name="Sorokin A."/>
        </authorList>
    </citation>
    <scope>NUCLEOTIDE SEQUENCE [LARGE SCALE GENOMIC DNA]</scope>
    <source>
        <strain>KBAB4</strain>
    </source>
</reference>
<protein>
    <recommendedName>
        <fullName evidence="1">Bifunctional protein GlmU</fullName>
    </recommendedName>
    <domain>
        <recommendedName>
            <fullName evidence="1">UDP-N-acetylglucosamine pyrophosphorylase</fullName>
            <ecNumber evidence="1">2.7.7.23</ecNumber>
        </recommendedName>
        <alternativeName>
            <fullName evidence="1">N-acetylglucosamine-1-phosphate uridyltransferase</fullName>
        </alternativeName>
    </domain>
    <domain>
        <recommendedName>
            <fullName evidence="1">Glucosamine-1-phosphate N-acetyltransferase</fullName>
            <ecNumber evidence="1">2.3.1.157</ecNumber>
        </recommendedName>
    </domain>
</protein>
<comment type="function">
    <text evidence="1">Catalyzes the last two sequential reactions in the de novo biosynthetic pathway for UDP-N-acetylglucosamine (UDP-GlcNAc). The C-terminal domain catalyzes the transfer of acetyl group from acetyl coenzyme A to glucosamine-1-phosphate (GlcN-1-P) to produce N-acetylglucosamine-1-phosphate (GlcNAc-1-P), which is converted into UDP-GlcNAc by the transfer of uridine 5-monophosphate (from uridine 5-triphosphate), a reaction catalyzed by the N-terminal domain.</text>
</comment>
<comment type="catalytic activity">
    <reaction evidence="1">
        <text>alpha-D-glucosamine 1-phosphate + acetyl-CoA = N-acetyl-alpha-D-glucosamine 1-phosphate + CoA + H(+)</text>
        <dbReference type="Rhea" id="RHEA:13725"/>
        <dbReference type="ChEBI" id="CHEBI:15378"/>
        <dbReference type="ChEBI" id="CHEBI:57287"/>
        <dbReference type="ChEBI" id="CHEBI:57288"/>
        <dbReference type="ChEBI" id="CHEBI:57776"/>
        <dbReference type="ChEBI" id="CHEBI:58516"/>
        <dbReference type="EC" id="2.3.1.157"/>
    </reaction>
</comment>
<comment type="catalytic activity">
    <reaction evidence="1">
        <text>N-acetyl-alpha-D-glucosamine 1-phosphate + UTP + H(+) = UDP-N-acetyl-alpha-D-glucosamine + diphosphate</text>
        <dbReference type="Rhea" id="RHEA:13509"/>
        <dbReference type="ChEBI" id="CHEBI:15378"/>
        <dbReference type="ChEBI" id="CHEBI:33019"/>
        <dbReference type="ChEBI" id="CHEBI:46398"/>
        <dbReference type="ChEBI" id="CHEBI:57705"/>
        <dbReference type="ChEBI" id="CHEBI:57776"/>
        <dbReference type="EC" id="2.7.7.23"/>
    </reaction>
</comment>
<comment type="cofactor">
    <cofactor evidence="1">
        <name>Mg(2+)</name>
        <dbReference type="ChEBI" id="CHEBI:18420"/>
    </cofactor>
    <text evidence="1">Binds 1 Mg(2+) ion per subunit.</text>
</comment>
<comment type="pathway">
    <text evidence="1">Nucleotide-sugar biosynthesis; UDP-N-acetyl-alpha-D-glucosamine biosynthesis; N-acetyl-alpha-D-glucosamine 1-phosphate from alpha-D-glucosamine 6-phosphate (route II): step 2/2.</text>
</comment>
<comment type="pathway">
    <text evidence="1">Nucleotide-sugar biosynthesis; UDP-N-acetyl-alpha-D-glucosamine biosynthesis; UDP-N-acetyl-alpha-D-glucosamine from N-acetyl-alpha-D-glucosamine 1-phosphate: step 1/1.</text>
</comment>
<comment type="pathway">
    <text evidence="1">Bacterial outer membrane biogenesis; LPS lipid A biosynthesis.</text>
</comment>
<comment type="subunit">
    <text evidence="1">Homotrimer.</text>
</comment>
<comment type="subcellular location">
    <subcellularLocation>
        <location evidence="1">Cytoplasm</location>
    </subcellularLocation>
</comment>
<comment type="similarity">
    <text evidence="1">In the N-terminal section; belongs to the N-acetylglucosamine-1-phosphate uridyltransferase family.</text>
</comment>
<comment type="similarity">
    <text evidence="1">In the C-terminal section; belongs to the transferase hexapeptide repeat family.</text>
</comment>
<accession>A9VN62</accession>
<organism>
    <name type="scientific">Bacillus mycoides (strain KBAB4)</name>
    <name type="common">Bacillus weihenstephanensis</name>
    <dbReference type="NCBI Taxonomy" id="315730"/>
    <lineage>
        <taxon>Bacteria</taxon>
        <taxon>Bacillati</taxon>
        <taxon>Bacillota</taxon>
        <taxon>Bacilli</taxon>
        <taxon>Bacillales</taxon>
        <taxon>Bacillaceae</taxon>
        <taxon>Bacillus</taxon>
        <taxon>Bacillus cereus group</taxon>
    </lineage>
</organism>